<organism>
    <name type="scientific">Mus musculus</name>
    <name type="common">Mouse</name>
    <dbReference type="NCBI Taxonomy" id="10090"/>
    <lineage>
        <taxon>Eukaryota</taxon>
        <taxon>Metazoa</taxon>
        <taxon>Chordata</taxon>
        <taxon>Craniata</taxon>
        <taxon>Vertebrata</taxon>
        <taxon>Euteleostomi</taxon>
        <taxon>Mammalia</taxon>
        <taxon>Eutheria</taxon>
        <taxon>Euarchontoglires</taxon>
        <taxon>Glires</taxon>
        <taxon>Rodentia</taxon>
        <taxon>Myomorpha</taxon>
        <taxon>Muroidea</taxon>
        <taxon>Muridae</taxon>
        <taxon>Murinae</taxon>
        <taxon>Mus</taxon>
        <taxon>Mus</taxon>
    </lineage>
</organism>
<keyword id="KW-0007">Acetylation</keyword>
<keyword id="KW-0963">Cytoplasm</keyword>
<keyword id="KW-0597">Phosphoprotein</keyword>
<keyword id="KW-1185">Reference proteome</keyword>
<keyword id="KW-0694">RNA-binding</keyword>
<dbReference type="EMBL" id="AF414101">
    <property type="protein sequence ID" value="AAL07470.1"/>
    <property type="molecule type" value="mRNA"/>
</dbReference>
<dbReference type="EMBL" id="AK004711">
    <property type="protein sequence ID" value="BAB23495.1"/>
    <property type="molecule type" value="mRNA"/>
</dbReference>
<dbReference type="EMBL" id="AK002853">
    <property type="protein sequence ID" value="BAB22408.1"/>
    <property type="molecule type" value="mRNA"/>
</dbReference>
<dbReference type="EMBL" id="AK003926">
    <property type="protein sequence ID" value="BAB23077.1"/>
    <property type="molecule type" value="mRNA"/>
</dbReference>
<dbReference type="EMBL" id="BC011225">
    <property type="protein sequence ID" value="AAH11225.1"/>
    <property type="molecule type" value="mRNA"/>
</dbReference>
<dbReference type="CCDS" id="CCDS27942.1"/>
<dbReference type="RefSeq" id="NP_080097.1">
    <property type="nucleotide sequence ID" value="NM_025821.2"/>
</dbReference>
<dbReference type="RefSeq" id="XP_006522409.2">
    <property type="nucleotide sequence ID" value="XM_006522346.4"/>
</dbReference>
<dbReference type="SMR" id="Q9CR86"/>
<dbReference type="BioGRID" id="206625">
    <property type="interactions" value="2"/>
</dbReference>
<dbReference type="FunCoup" id="Q9CR86">
    <property type="interactions" value="1439"/>
</dbReference>
<dbReference type="STRING" id="10090.ENSMUSP00000008537"/>
<dbReference type="GlyGen" id="Q9CR86">
    <property type="glycosylation" value="1 site, 1 O-linked glycan (1 site)"/>
</dbReference>
<dbReference type="iPTMnet" id="Q9CR86"/>
<dbReference type="PhosphoSitePlus" id="Q9CR86"/>
<dbReference type="SwissPalm" id="Q9CR86"/>
<dbReference type="CPTAC" id="non-CPTAC-4023"/>
<dbReference type="jPOST" id="Q9CR86"/>
<dbReference type="PaxDb" id="10090-ENSMUSP00000008537"/>
<dbReference type="ProteomicsDB" id="281468"/>
<dbReference type="Pumba" id="Q9CR86"/>
<dbReference type="Antibodypedia" id="24559">
    <property type="antibodies" value="78 antibodies from 22 providers"/>
</dbReference>
<dbReference type="DNASU" id="52502"/>
<dbReference type="Ensembl" id="ENSMUST00000008537.10">
    <property type="protein sequence ID" value="ENSMUSP00000008537.9"/>
    <property type="gene ID" value="ENSMUSG00000008393.10"/>
</dbReference>
<dbReference type="GeneID" id="52502"/>
<dbReference type="KEGG" id="mmu:52502"/>
<dbReference type="UCSC" id="uc007yct.1">
    <property type="organism name" value="mouse"/>
</dbReference>
<dbReference type="AGR" id="MGI:1196368"/>
<dbReference type="CTD" id="23589"/>
<dbReference type="MGI" id="MGI:1196368">
    <property type="gene designation" value="Carhsp1"/>
</dbReference>
<dbReference type="VEuPathDB" id="HostDB:ENSMUSG00000008393"/>
<dbReference type="eggNOG" id="KOG3070">
    <property type="taxonomic scope" value="Eukaryota"/>
</dbReference>
<dbReference type="GeneTree" id="ENSGT00390000000022"/>
<dbReference type="HOGENOM" id="CLU_139526_1_0_1"/>
<dbReference type="InParanoid" id="Q9CR86"/>
<dbReference type="OMA" id="YRGVCKC"/>
<dbReference type="OrthoDB" id="448492at2759"/>
<dbReference type="PhylomeDB" id="Q9CR86"/>
<dbReference type="TreeFam" id="TF324381"/>
<dbReference type="BioGRID-ORCS" id="52502">
    <property type="hits" value="3 hits in 74 CRISPR screens"/>
</dbReference>
<dbReference type="ChiTaRS" id="Carhsp1">
    <property type="organism name" value="mouse"/>
</dbReference>
<dbReference type="PRO" id="PR:Q9CR86"/>
<dbReference type="Proteomes" id="UP000000589">
    <property type="component" value="Chromosome 16"/>
</dbReference>
<dbReference type="RNAct" id="Q9CR86">
    <property type="molecule type" value="protein"/>
</dbReference>
<dbReference type="Bgee" id="ENSMUSG00000008393">
    <property type="expression patterns" value="Expressed in lens of camera-type eye and 259 other cell types or tissues"/>
</dbReference>
<dbReference type="ExpressionAtlas" id="Q9CR86">
    <property type="expression patterns" value="baseline and differential"/>
</dbReference>
<dbReference type="GO" id="GO:0005829">
    <property type="term" value="C:cytosol"/>
    <property type="evidence" value="ECO:0000314"/>
    <property type="project" value="UniProtKB"/>
</dbReference>
<dbReference type="GO" id="GO:0043186">
    <property type="term" value="C:P granule"/>
    <property type="evidence" value="ECO:0000314"/>
    <property type="project" value="UniProtKB"/>
</dbReference>
<dbReference type="GO" id="GO:0000932">
    <property type="term" value="C:P-body"/>
    <property type="evidence" value="ECO:0007669"/>
    <property type="project" value="UniProtKB-SubCell"/>
</dbReference>
<dbReference type="GO" id="GO:0003730">
    <property type="term" value="F:mRNA 3'-UTR binding"/>
    <property type="evidence" value="ECO:0000250"/>
    <property type="project" value="UniProtKB"/>
</dbReference>
<dbReference type="GO" id="GO:0043488">
    <property type="term" value="P:regulation of mRNA stability"/>
    <property type="evidence" value="ECO:0000315"/>
    <property type="project" value="UniProtKB"/>
</dbReference>
<dbReference type="CDD" id="cd04458">
    <property type="entry name" value="CSP_CDS"/>
    <property type="match status" value="1"/>
</dbReference>
<dbReference type="FunFam" id="2.40.50.140:FF:000086">
    <property type="entry name" value="Cold shock domain-containing protein C2"/>
    <property type="match status" value="1"/>
</dbReference>
<dbReference type="Gene3D" id="2.40.50.140">
    <property type="entry name" value="Nucleic acid-binding proteins"/>
    <property type="match status" value="1"/>
</dbReference>
<dbReference type="InterPro" id="IPR052069">
    <property type="entry name" value="Ca-reg_mRNA-binding_domain"/>
</dbReference>
<dbReference type="InterPro" id="IPR011129">
    <property type="entry name" value="CSD"/>
</dbReference>
<dbReference type="InterPro" id="IPR019844">
    <property type="entry name" value="CSD_CS"/>
</dbReference>
<dbReference type="InterPro" id="IPR002059">
    <property type="entry name" value="CSP_DNA-bd"/>
</dbReference>
<dbReference type="InterPro" id="IPR012340">
    <property type="entry name" value="NA-bd_OB-fold"/>
</dbReference>
<dbReference type="PANTHER" id="PTHR12962">
    <property type="entry name" value="CALCIUM-REGULATED HEAT STABLE PROTEIN CRHSP-24-RELATED"/>
    <property type="match status" value="1"/>
</dbReference>
<dbReference type="PANTHER" id="PTHR12962:SF3">
    <property type="entry name" value="CALCIUM-REGULATED HEAT-STABLE PROTEIN 1"/>
    <property type="match status" value="1"/>
</dbReference>
<dbReference type="Pfam" id="PF00313">
    <property type="entry name" value="CSD"/>
    <property type="match status" value="1"/>
</dbReference>
<dbReference type="SMART" id="SM00357">
    <property type="entry name" value="CSP"/>
    <property type="match status" value="1"/>
</dbReference>
<dbReference type="SUPFAM" id="SSF50249">
    <property type="entry name" value="Nucleic acid-binding proteins"/>
    <property type="match status" value="1"/>
</dbReference>
<dbReference type="PROSITE" id="PS00352">
    <property type="entry name" value="CSD_1"/>
    <property type="match status" value="1"/>
</dbReference>
<dbReference type="PROSITE" id="PS51857">
    <property type="entry name" value="CSD_2"/>
    <property type="match status" value="1"/>
</dbReference>
<proteinExistence type="evidence at protein level"/>
<feature type="initiator methionine" description="Removed" evidence="2">
    <location>
        <position position="1"/>
    </location>
</feature>
<feature type="chain" id="PRO_0000100231" description="Calcium-regulated heat stable protein 1">
    <location>
        <begin position="2"/>
        <end position="148"/>
    </location>
</feature>
<feature type="domain" description="CSD">
    <location>
        <begin position="63"/>
        <end position="130"/>
    </location>
</feature>
<feature type="region of interest" description="Disordered" evidence="3">
    <location>
        <begin position="1"/>
        <end position="47"/>
    </location>
</feature>
<feature type="compositionally biased region" description="Pro residues" evidence="3">
    <location>
        <begin position="1"/>
        <end position="12"/>
    </location>
</feature>
<feature type="modified residue" description="N-acetylserine" evidence="2">
    <location>
        <position position="2"/>
    </location>
</feature>
<feature type="modified residue" description="Phosphoserine" evidence="5 6 7">
    <location>
        <position position="31"/>
    </location>
</feature>
<feature type="modified residue" description="Phosphoserine" evidence="5 6 7">
    <location>
        <position position="33"/>
    </location>
</feature>
<feature type="modified residue" description="Phosphoserine" evidence="5 7">
    <location>
        <position position="42"/>
    </location>
</feature>
<feature type="modified residue" description="Phosphothreonine" evidence="2">
    <location>
        <position position="46"/>
    </location>
</feature>
<feature type="modified residue" description="Phosphoserine" evidence="2">
    <location>
        <position position="53"/>
    </location>
</feature>
<feature type="modified residue" description="Phosphoserine" evidence="2">
    <location>
        <position position="59"/>
    </location>
</feature>
<feature type="modified residue" description="Phosphoserine" evidence="2">
    <location>
        <position position="147"/>
    </location>
</feature>
<accession>Q9CR86</accession>
<sequence length="148" mass="16062">MSSEPPPPPLQPPTHQTSVGLLDTPRTRDRSPSPLRGNVVPSPLPTRRTRTFSATVRASQGPVYKGVCKCFCRSKGHGFITPADGGPDIFLHISDVEGEYVPVEGDEVTYKMCSIPPKNEKLQAVEVVITHLAPGTKHETWSGHVISN</sequence>
<evidence type="ECO:0000250" key="1"/>
<evidence type="ECO:0000250" key="2">
    <source>
        <dbReference type="UniProtKB" id="Q9Y2V2"/>
    </source>
</evidence>
<evidence type="ECO:0000256" key="3">
    <source>
        <dbReference type="SAM" id="MobiDB-lite"/>
    </source>
</evidence>
<evidence type="ECO:0000269" key="4">
    <source>
    </source>
</evidence>
<evidence type="ECO:0007744" key="5">
    <source>
    </source>
</evidence>
<evidence type="ECO:0007744" key="6">
    <source>
    </source>
</evidence>
<evidence type="ECO:0007744" key="7">
    <source>
    </source>
</evidence>
<protein>
    <recommendedName>
        <fullName>Calcium-regulated heat stable protein 1</fullName>
    </recommendedName>
    <alternativeName>
        <fullName>Calcium-regulated heat-stable protein of 24 kDa</fullName>
        <shortName>CRHSP-24</shortName>
    </alternativeName>
</protein>
<name>CHSP1_MOUSE</name>
<reference key="1">
    <citation type="submission" date="2001-08" db="EMBL/GenBank/DDBJ databases">
        <title>Identification and regulation of the phosphorylation sites on the novel calcineurin substrate CRHSP-24.</title>
        <authorList>
            <person name="Lee S.-H."/>
            <person name="Williams J."/>
        </authorList>
    </citation>
    <scope>NUCLEOTIDE SEQUENCE [MRNA]</scope>
    <source>
        <tissue>Pancreas</tissue>
    </source>
</reference>
<reference key="2">
    <citation type="journal article" date="2005" name="Science">
        <title>The transcriptional landscape of the mammalian genome.</title>
        <authorList>
            <person name="Carninci P."/>
            <person name="Kasukawa T."/>
            <person name="Katayama S."/>
            <person name="Gough J."/>
            <person name="Frith M.C."/>
            <person name="Maeda N."/>
            <person name="Oyama R."/>
            <person name="Ravasi T."/>
            <person name="Lenhard B."/>
            <person name="Wells C."/>
            <person name="Kodzius R."/>
            <person name="Shimokawa K."/>
            <person name="Bajic V.B."/>
            <person name="Brenner S.E."/>
            <person name="Batalov S."/>
            <person name="Forrest A.R."/>
            <person name="Zavolan M."/>
            <person name="Davis M.J."/>
            <person name="Wilming L.G."/>
            <person name="Aidinis V."/>
            <person name="Allen J.E."/>
            <person name="Ambesi-Impiombato A."/>
            <person name="Apweiler R."/>
            <person name="Aturaliya R.N."/>
            <person name="Bailey T.L."/>
            <person name="Bansal M."/>
            <person name="Baxter L."/>
            <person name="Beisel K.W."/>
            <person name="Bersano T."/>
            <person name="Bono H."/>
            <person name="Chalk A.M."/>
            <person name="Chiu K.P."/>
            <person name="Choudhary V."/>
            <person name="Christoffels A."/>
            <person name="Clutterbuck D.R."/>
            <person name="Crowe M.L."/>
            <person name="Dalla E."/>
            <person name="Dalrymple B.P."/>
            <person name="de Bono B."/>
            <person name="Della Gatta G."/>
            <person name="di Bernardo D."/>
            <person name="Down T."/>
            <person name="Engstrom P."/>
            <person name="Fagiolini M."/>
            <person name="Faulkner G."/>
            <person name="Fletcher C.F."/>
            <person name="Fukushima T."/>
            <person name="Furuno M."/>
            <person name="Futaki S."/>
            <person name="Gariboldi M."/>
            <person name="Georgii-Hemming P."/>
            <person name="Gingeras T.R."/>
            <person name="Gojobori T."/>
            <person name="Green R.E."/>
            <person name="Gustincich S."/>
            <person name="Harbers M."/>
            <person name="Hayashi Y."/>
            <person name="Hensch T.K."/>
            <person name="Hirokawa N."/>
            <person name="Hill D."/>
            <person name="Huminiecki L."/>
            <person name="Iacono M."/>
            <person name="Ikeo K."/>
            <person name="Iwama A."/>
            <person name="Ishikawa T."/>
            <person name="Jakt M."/>
            <person name="Kanapin A."/>
            <person name="Katoh M."/>
            <person name="Kawasawa Y."/>
            <person name="Kelso J."/>
            <person name="Kitamura H."/>
            <person name="Kitano H."/>
            <person name="Kollias G."/>
            <person name="Krishnan S.P."/>
            <person name="Kruger A."/>
            <person name="Kummerfeld S.K."/>
            <person name="Kurochkin I.V."/>
            <person name="Lareau L.F."/>
            <person name="Lazarevic D."/>
            <person name="Lipovich L."/>
            <person name="Liu J."/>
            <person name="Liuni S."/>
            <person name="McWilliam S."/>
            <person name="Madan Babu M."/>
            <person name="Madera M."/>
            <person name="Marchionni L."/>
            <person name="Matsuda H."/>
            <person name="Matsuzawa S."/>
            <person name="Miki H."/>
            <person name="Mignone F."/>
            <person name="Miyake S."/>
            <person name="Morris K."/>
            <person name="Mottagui-Tabar S."/>
            <person name="Mulder N."/>
            <person name="Nakano N."/>
            <person name="Nakauchi H."/>
            <person name="Ng P."/>
            <person name="Nilsson R."/>
            <person name="Nishiguchi S."/>
            <person name="Nishikawa S."/>
            <person name="Nori F."/>
            <person name="Ohara O."/>
            <person name="Okazaki Y."/>
            <person name="Orlando V."/>
            <person name="Pang K.C."/>
            <person name="Pavan W.J."/>
            <person name="Pavesi G."/>
            <person name="Pesole G."/>
            <person name="Petrovsky N."/>
            <person name="Piazza S."/>
            <person name="Reed J."/>
            <person name="Reid J.F."/>
            <person name="Ring B.Z."/>
            <person name="Ringwald M."/>
            <person name="Rost B."/>
            <person name="Ruan Y."/>
            <person name="Salzberg S.L."/>
            <person name="Sandelin A."/>
            <person name="Schneider C."/>
            <person name="Schoenbach C."/>
            <person name="Sekiguchi K."/>
            <person name="Semple C.A."/>
            <person name="Seno S."/>
            <person name="Sessa L."/>
            <person name="Sheng Y."/>
            <person name="Shibata Y."/>
            <person name="Shimada H."/>
            <person name="Shimada K."/>
            <person name="Silva D."/>
            <person name="Sinclair B."/>
            <person name="Sperling S."/>
            <person name="Stupka E."/>
            <person name="Sugiura K."/>
            <person name="Sultana R."/>
            <person name="Takenaka Y."/>
            <person name="Taki K."/>
            <person name="Tammoja K."/>
            <person name="Tan S.L."/>
            <person name="Tang S."/>
            <person name="Taylor M.S."/>
            <person name="Tegner J."/>
            <person name="Teichmann S.A."/>
            <person name="Ueda H.R."/>
            <person name="van Nimwegen E."/>
            <person name="Verardo R."/>
            <person name="Wei C.L."/>
            <person name="Yagi K."/>
            <person name="Yamanishi H."/>
            <person name="Zabarovsky E."/>
            <person name="Zhu S."/>
            <person name="Zimmer A."/>
            <person name="Hide W."/>
            <person name="Bult C."/>
            <person name="Grimmond S.M."/>
            <person name="Teasdale R.D."/>
            <person name="Liu E.T."/>
            <person name="Brusic V."/>
            <person name="Quackenbush J."/>
            <person name="Wahlestedt C."/>
            <person name="Mattick J.S."/>
            <person name="Hume D.A."/>
            <person name="Kai C."/>
            <person name="Sasaki D."/>
            <person name="Tomaru Y."/>
            <person name="Fukuda S."/>
            <person name="Kanamori-Katayama M."/>
            <person name="Suzuki M."/>
            <person name="Aoki J."/>
            <person name="Arakawa T."/>
            <person name="Iida J."/>
            <person name="Imamura K."/>
            <person name="Itoh M."/>
            <person name="Kato T."/>
            <person name="Kawaji H."/>
            <person name="Kawagashira N."/>
            <person name="Kawashima T."/>
            <person name="Kojima M."/>
            <person name="Kondo S."/>
            <person name="Konno H."/>
            <person name="Nakano K."/>
            <person name="Ninomiya N."/>
            <person name="Nishio T."/>
            <person name="Okada M."/>
            <person name="Plessy C."/>
            <person name="Shibata K."/>
            <person name="Shiraki T."/>
            <person name="Suzuki S."/>
            <person name="Tagami M."/>
            <person name="Waki K."/>
            <person name="Watahiki A."/>
            <person name="Okamura-Oho Y."/>
            <person name="Suzuki H."/>
            <person name="Kawai J."/>
            <person name="Hayashizaki Y."/>
        </authorList>
    </citation>
    <scope>NUCLEOTIDE SEQUENCE [LARGE SCALE MRNA]</scope>
    <source>
        <strain>C57BL/6J</strain>
        <tissue>Embryo</tissue>
        <tissue>Kidney</tissue>
        <tissue>Lung</tissue>
    </source>
</reference>
<reference key="3">
    <citation type="journal article" date="2004" name="Genome Res.">
        <title>The status, quality, and expansion of the NIH full-length cDNA project: the Mammalian Gene Collection (MGC).</title>
        <authorList>
            <consortium name="The MGC Project Team"/>
        </authorList>
    </citation>
    <scope>NUCLEOTIDE SEQUENCE [LARGE SCALE MRNA]</scope>
    <source>
        <tissue>Salivary gland</tissue>
    </source>
</reference>
<reference key="4">
    <citation type="journal article" date="2007" name="Proc. Natl. Acad. Sci. U.S.A.">
        <title>Large-scale phosphorylation analysis of mouse liver.</title>
        <authorList>
            <person name="Villen J."/>
            <person name="Beausoleil S.A."/>
            <person name="Gerber S.A."/>
            <person name="Gygi S.P."/>
        </authorList>
    </citation>
    <scope>PHOSPHORYLATION [LARGE SCALE ANALYSIS] AT SER-31; SER-33 AND SER-42</scope>
    <scope>IDENTIFICATION BY MASS SPECTROMETRY [LARGE SCALE ANALYSIS]</scope>
    <source>
        <tissue>Liver</tissue>
    </source>
</reference>
<reference key="5">
    <citation type="journal article" date="2009" name="Mol. Cell. Proteomics">
        <title>Large scale localization of protein phosphorylation by use of electron capture dissociation mass spectrometry.</title>
        <authorList>
            <person name="Sweet S.M."/>
            <person name="Bailey C.M."/>
            <person name="Cunningham D.L."/>
            <person name="Heath J.K."/>
            <person name="Cooper H.J."/>
        </authorList>
    </citation>
    <scope>PHOSPHORYLATION [LARGE SCALE ANALYSIS] AT SER-31 AND SER-33</scope>
    <scope>IDENTIFICATION BY MASS SPECTROMETRY [LARGE SCALE ANALYSIS]</scope>
    <source>
        <tissue>Embryonic fibroblast</tissue>
    </source>
</reference>
<reference key="6">
    <citation type="journal article" date="2010" name="Cell">
        <title>A tissue-specific atlas of mouse protein phosphorylation and expression.</title>
        <authorList>
            <person name="Huttlin E.L."/>
            <person name="Jedrychowski M.P."/>
            <person name="Elias J.E."/>
            <person name="Goswami T."/>
            <person name="Rad R."/>
            <person name="Beausoleil S.A."/>
            <person name="Villen J."/>
            <person name="Haas W."/>
            <person name="Sowa M.E."/>
            <person name="Gygi S.P."/>
        </authorList>
    </citation>
    <scope>PHOSPHORYLATION [LARGE SCALE ANALYSIS] AT SER-31; SER-33 AND SER-42</scope>
    <scope>IDENTIFICATION BY MASS SPECTROMETRY [LARGE SCALE ANALYSIS]</scope>
    <source>
        <tissue>Brain</tissue>
        <tissue>Brown adipose tissue</tissue>
        <tissue>Heart</tissue>
        <tissue>Kidney</tissue>
        <tissue>Liver</tissue>
        <tissue>Lung</tissue>
        <tissue>Pancreas</tissue>
        <tissue>Spleen</tissue>
        <tissue>Testis</tissue>
    </source>
</reference>
<reference key="7">
    <citation type="journal article" date="2011" name="Mol. Cell. Biol.">
        <title>CARHSP1 is required for effective tumor necrosis factor alpha mRNA stabilization and localizes to processing bodies and exosomes.</title>
        <authorList>
            <person name="Pfeiffer J.R."/>
            <person name="McAvoy B.L."/>
            <person name="Fecteau R.E."/>
            <person name="Deleault K.M."/>
            <person name="Brooks S.A."/>
        </authorList>
    </citation>
    <scope>FUNCTION</scope>
    <scope>RNA-BINDING</scope>
    <scope>PHOSPHORYLATION</scope>
    <scope>DEPHOSPHORYLATION</scope>
    <scope>SUBCELLULAR LOCATION</scope>
</reference>
<comment type="function">
    <text evidence="4">Binds mRNA and regulates the stability of target mRNA.</text>
</comment>
<comment type="subunit">
    <text evidence="1">Homodimer. Interacts with STYX (By similarity).</text>
</comment>
<comment type="subcellular location">
    <subcellularLocation>
        <location evidence="4">Cytoplasm</location>
    </subcellularLocation>
    <subcellularLocation>
        <location evidence="4">Cytoplasm</location>
        <location evidence="4">P-body</location>
    </subcellularLocation>
    <subcellularLocation>
        <location evidence="4">Cytoplasmic granule</location>
    </subcellularLocation>
    <text>Detected at cytoplasmic stress granules and P-bodies. Detected at exosome granules where mRNA is degraded.</text>
</comment>
<comment type="PTM">
    <text evidence="1">Can be phosphorylated by DYRK2 (in vitro). Dephosphorylated by calcineurin in a Ca(2+) dependent manner (By similarity).</text>
</comment>
<gene>
    <name type="primary">Carhsp1</name>
</gene>